<organism>
    <name type="scientific">Phasmahyla jandaia</name>
    <name type="common">Jandaia leaf frog</name>
    <name type="synonym">Phyllomedusa jandaia</name>
    <dbReference type="NCBI Taxonomy" id="762504"/>
    <lineage>
        <taxon>Eukaryota</taxon>
        <taxon>Metazoa</taxon>
        <taxon>Chordata</taxon>
        <taxon>Craniata</taxon>
        <taxon>Vertebrata</taxon>
        <taxon>Euteleostomi</taxon>
        <taxon>Amphibia</taxon>
        <taxon>Batrachia</taxon>
        <taxon>Anura</taxon>
        <taxon>Neobatrachia</taxon>
        <taxon>Hyloidea</taxon>
        <taxon>Hylidae</taxon>
        <taxon>Phyllomedusinae</taxon>
        <taxon>Phasmahyla</taxon>
    </lineage>
</organism>
<proteinExistence type="evidence at protein level"/>
<dbReference type="GO" id="GO:0005576">
    <property type="term" value="C:extracellular region"/>
    <property type="evidence" value="ECO:0007669"/>
    <property type="project" value="UniProtKB-SubCell"/>
</dbReference>
<sequence length="17" mass="1797">LLGMIPVAISAINLMKL</sequence>
<keyword id="KW-0027">Amidation</keyword>
<keyword id="KW-0903">Direct protein sequencing</keyword>
<keyword id="KW-0964">Secreted</keyword>
<reference evidence="3" key="1">
    <citation type="journal article" date="2011" name="Toxicon">
        <title>Peptidomic dissection of the skin secretion of Phasmahyla jandaia (Bokermann and Sazima, 1978) (Anura, Hylidae, Phyllomedusinae).</title>
        <authorList>
            <person name="Rates B."/>
            <person name="Silva L.P."/>
            <person name="Ireno I.C."/>
            <person name="Leite F.S."/>
            <person name="Borges M.H."/>
            <person name="Bloch C. Jr."/>
            <person name="De Lima M.E."/>
            <person name="Pimenta A.M."/>
        </authorList>
    </citation>
    <scope>PROTEIN SEQUENCE</scope>
    <scope>SUBCELLULAR LOCATION</scope>
    <scope>TISSUE SPECIFICITY</scope>
    <scope>MASS SPECTROMETRY</scope>
    <scope>AMIDATION AT LEU-17</scope>
    <source>
        <tissue evidence="1">Skin secretion</tissue>
    </source>
</reference>
<accession>P86609</accession>
<evidence type="ECO:0000269" key="1">
    <source>
    </source>
</evidence>
<evidence type="ECO:0000303" key="2">
    <source>
    </source>
</evidence>
<evidence type="ECO:0000305" key="3"/>
<name>SSP51_PHAJA</name>
<protein>
    <recommendedName>
        <fullName evidence="2">Skin secreted peptide P5-1</fullName>
        <shortName evidence="2">PjP5-1</shortName>
    </recommendedName>
</protein>
<feature type="peptide" id="PRO_0000404646" description="Skin secreted peptide P5-1" evidence="1">
    <location>
        <begin position="1"/>
        <end position="17"/>
    </location>
</feature>
<feature type="modified residue" description="Leucine amide" evidence="1">
    <location>
        <position position="17"/>
    </location>
</feature>
<feature type="unsure residue" description="L or I" evidence="1">
    <location>
        <position position="1"/>
    </location>
</feature>
<feature type="unsure residue" description="L or I" evidence="1">
    <location>
        <position position="14"/>
    </location>
</feature>
<feature type="unsure residue" description="L or I" evidence="1">
    <location>
        <position position="17"/>
    </location>
</feature>
<comment type="subcellular location">
    <subcellularLocation>
        <location evidence="1">Secreted</location>
    </subcellularLocation>
</comment>
<comment type="tissue specificity">
    <text evidence="1">Expressed by the skin glands.</text>
</comment>
<comment type="mass spectrometry" mass="1795.2" method="MALDI" evidence="1"/>